<organism>
    <name type="scientific">Nocardia farcinica (strain IFM 10152)</name>
    <dbReference type="NCBI Taxonomy" id="247156"/>
    <lineage>
        <taxon>Bacteria</taxon>
        <taxon>Bacillati</taxon>
        <taxon>Actinomycetota</taxon>
        <taxon>Actinomycetes</taxon>
        <taxon>Mycobacteriales</taxon>
        <taxon>Nocardiaceae</taxon>
        <taxon>Nocardia</taxon>
    </lineage>
</organism>
<comment type="function">
    <text evidence="1">Catalyzes the attachment of tyrosine to tRNA(Tyr) in a two-step reaction: tyrosine is first activated by ATP to form Tyr-AMP and then transferred to the acceptor end of tRNA(Tyr).</text>
</comment>
<comment type="catalytic activity">
    <reaction evidence="1">
        <text>tRNA(Tyr) + L-tyrosine + ATP = L-tyrosyl-tRNA(Tyr) + AMP + diphosphate + H(+)</text>
        <dbReference type="Rhea" id="RHEA:10220"/>
        <dbReference type="Rhea" id="RHEA-COMP:9706"/>
        <dbReference type="Rhea" id="RHEA-COMP:9707"/>
        <dbReference type="ChEBI" id="CHEBI:15378"/>
        <dbReference type="ChEBI" id="CHEBI:30616"/>
        <dbReference type="ChEBI" id="CHEBI:33019"/>
        <dbReference type="ChEBI" id="CHEBI:58315"/>
        <dbReference type="ChEBI" id="CHEBI:78442"/>
        <dbReference type="ChEBI" id="CHEBI:78536"/>
        <dbReference type="ChEBI" id="CHEBI:456215"/>
        <dbReference type="EC" id="6.1.1.1"/>
    </reaction>
</comment>
<comment type="subunit">
    <text evidence="1">Homodimer.</text>
</comment>
<comment type="subcellular location">
    <subcellularLocation>
        <location evidence="1">Cytoplasm</location>
    </subcellularLocation>
</comment>
<comment type="similarity">
    <text evidence="1">Belongs to the class-I aminoacyl-tRNA synthetase family. TyrS type 1 subfamily.</text>
</comment>
<sequence length="429" mass="46876">MSGDIIDELTWRGLIAQSTDLDALRAALAAGPLTLYAGFDPTAASLHAGHLVPLLALKRFQRAGHRPIVLAGGATGLIGDPRDVGERTMNSSDTVAEWARRIRSQLERFVDLDDSPTGAVIVNNMDWTGPLSAVDFLRDIGKHFSVNVMLARDTVKRRLEGDGMSYTEFSYMLLQANDYVQLRRSFGCRLQVGGSDQWGNIIAGVELNRRLDGESVHALTVPLVTSADGKKFGKSTGGGSLWLDPEMTSPYAWYQYFVNTADADVVRYLRWFTFLDREELAELERATAERPHAREAQRRLAAEMTTLVHGEQHTRAVQLASQALFGRGDLRELDEATLGAALREAAGEGEVARVTPGEPATIVDLLVATGLAESRGAARRTVNEGGAAVNNQKIADPDWTPADGDYLHGRWLVVRRGKRNMAGVLRDGN</sequence>
<proteinExistence type="inferred from homology"/>
<name>SYY_NOCFA</name>
<feature type="chain" id="PRO_0000234743" description="Tyrosine--tRNA ligase">
    <location>
        <begin position="1"/>
        <end position="429"/>
    </location>
</feature>
<feature type="domain" description="S4 RNA-binding" evidence="1">
    <location>
        <begin position="360"/>
        <end position="417"/>
    </location>
</feature>
<feature type="short sequence motif" description="'HIGH' region">
    <location>
        <begin position="41"/>
        <end position="50"/>
    </location>
</feature>
<feature type="short sequence motif" description="'KMSKS' region">
    <location>
        <begin position="231"/>
        <end position="235"/>
    </location>
</feature>
<feature type="binding site" evidence="1">
    <location>
        <position position="36"/>
    </location>
    <ligand>
        <name>L-tyrosine</name>
        <dbReference type="ChEBI" id="CHEBI:58315"/>
    </ligand>
</feature>
<feature type="binding site" evidence="1">
    <location>
        <position position="171"/>
    </location>
    <ligand>
        <name>L-tyrosine</name>
        <dbReference type="ChEBI" id="CHEBI:58315"/>
    </ligand>
</feature>
<feature type="binding site" evidence="1">
    <location>
        <position position="175"/>
    </location>
    <ligand>
        <name>L-tyrosine</name>
        <dbReference type="ChEBI" id="CHEBI:58315"/>
    </ligand>
</feature>
<feature type="binding site" evidence="1">
    <location>
        <position position="234"/>
    </location>
    <ligand>
        <name>ATP</name>
        <dbReference type="ChEBI" id="CHEBI:30616"/>
    </ligand>
</feature>
<protein>
    <recommendedName>
        <fullName evidence="1">Tyrosine--tRNA ligase</fullName>
        <ecNumber evidence="1">6.1.1.1</ecNumber>
    </recommendedName>
    <alternativeName>
        <fullName evidence="1">Tyrosyl-tRNA synthetase</fullName>
        <shortName evidence="1">TyrRS</shortName>
    </alternativeName>
</protein>
<reference key="1">
    <citation type="journal article" date="2004" name="Proc. Natl. Acad. Sci. U.S.A.">
        <title>The complete genomic sequence of Nocardia farcinica IFM 10152.</title>
        <authorList>
            <person name="Ishikawa J."/>
            <person name="Yamashita A."/>
            <person name="Mikami Y."/>
            <person name="Hoshino Y."/>
            <person name="Kurita H."/>
            <person name="Hotta K."/>
            <person name="Shiba T."/>
            <person name="Hattori M."/>
        </authorList>
    </citation>
    <scope>NUCLEOTIDE SEQUENCE [LARGE SCALE GENOMIC DNA]</scope>
    <source>
        <strain>IFM 10152</strain>
    </source>
</reference>
<gene>
    <name evidence="1" type="primary">tyrS</name>
    <name type="ordered locus">NFA_19910</name>
</gene>
<evidence type="ECO:0000255" key="1">
    <source>
        <dbReference type="HAMAP-Rule" id="MF_02006"/>
    </source>
</evidence>
<dbReference type="EC" id="6.1.1.1" evidence="1"/>
<dbReference type="EMBL" id="AP006618">
    <property type="protein sequence ID" value="BAD56837.1"/>
    <property type="molecule type" value="Genomic_DNA"/>
</dbReference>
<dbReference type="RefSeq" id="WP_011208522.1">
    <property type="nucleotide sequence ID" value="NC_006361.1"/>
</dbReference>
<dbReference type="SMR" id="Q5YYA4"/>
<dbReference type="STRING" id="247156.NFA_19910"/>
<dbReference type="GeneID" id="61132769"/>
<dbReference type="KEGG" id="nfa:NFA_19910"/>
<dbReference type="eggNOG" id="COG0162">
    <property type="taxonomic scope" value="Bacteria"/>
</dbReference>
<dbReference type="HOGENOM" id="CLU_024003_0_2_11"/>
<dbReference type="OrthoDB" id="9804243at2"/>
<dbReference type="Proteomes" id="UP000006820">
    <property type="component" value="Chromosome"/>
</dbReference>
<dbReference type="GO" id="GO:0005829">
    <property type="term" value="C:cytosol"/>
    <property type="evidence" value="ECO:0007669"/>
    <property type="project" value="TreeGrafter"/>
</dbReference>
<dbReference type="GO" id="GO:0005524">
    <property type="term" value="F:ATP binding"/>
    <property type="evidence" value="ECO:0007669"/>
    <property type="project" value="UniProtKB-UniRule"/>
</dbReference>
<dbReference type="GO" id="GO:0003723">
    <property type="term" value="F:RNA binding"/>
    <property type="evidence" value="ECO:0007669"/>
    <property type="project" value="UniProtKB-KW"/>
</dbReference>
<dbReference type="GO" id="GO:0004831">
    <property type="term" value="F:tyrosine-tRNA ligase activity"/>
    <property type="evidence" value="ECO:0007669"/>
    <property type="project" value="UniProtKB-UniRule"/>
</dbReference>
<dbReference type="GO" id="GO:0006437">
    <property type="term" value="P:tyrosyl-tRNA aminoacylation"/>
    <property type="evidence" value="ECO:0007669"/>
    <property type="project" value="UniProtKB-UniRule"/>
</dbReference>
<dbReference type="CDD" id="cd00165">
    <property type="entry name" value="S4"/>
    <property type="match status" value="1"/>
</dbReference>
<dbReference type="CDD" id="cd00805">
    <property type="entry name" value="TyrRS_core"/>
    <property type="match status" value="1"/>
</dbReference>
<dbReference type="FunFam" id="1.10.240.10:FF:000001">
    <property type="entry name" value="Tyrosine--tRNA ligase"/>
    <property type="match status" value="1"/>
</dbReference>
<dbReference type="FunFam" id="3.10.290.10:FF:000014">
    <property type="entry name" value="Tyrosine--tRNA ligase"/>
    <property type="match status" value="1"/>
</dbReference>
<dbReference type="FunFam" id="3.40.50.620:FF:000008">
    <property type="entry name" value="Tyrosine--tRNA ligase"/>
    <property type="match status" value="1"/>
</dbReference>
<dbReference type="Gene3D" id="3.40.50.620">
    <property type="entry name" value="HUPs"/>
    <property type="match status" value="1"/>
</dbReference>
<dbReference type="Gene3D" id="3.10.290.10">
    <property type="entry name" value="RNA-binding S4 domain"/>
    <property type="match status" value="1"/>
</dbReference>
<dbReference type="Gene3D" id="1.10.240.10">
    <property type="entry name" value="Tyrosyl-Transfer RNA Synthetase"/>
    <property type="match status" value="1"/>
</dbReference>
<dbReference type="HAMAP" id="MF_02006">
    <property type="entry name" value="Tyr_tRNA_synth_type1"/>
    <property type="match status" value="1"/>
</dbReference>
<dbReference type="InterPro" id="IPR001412">
    <property type="entry name" value="aa-tRNA-synth_I_CS"/>
</dbReference>
<dbReference type="InterPro" id="IPR002305">
    <property type="entry name" value="aa-tRNA-synth_Ic"/>
</dbReference>
<dbReference type="InterPro" id="IPR014729">
    <property type="entry name" value="Rossmann-like_a/b/a_fold"/>
</dbReference>
<dbReference type="InterPro" id="IPR002942">
    <property type="entry name" value="S4_RNA-bd"/>
</dbReference>
<dbReference type="InterPro" id="IPR036986">
    <property type="entry name" value="S4_RNA-bd_sf"/>
</dbReference>
<dbReference type="InterPro" id="IPR054608">
    <property type="entry name" value="SYY-like_C"/>
</dbReference>
<dbReference type="InterPro" id="IPR002307">
    <property type="entry name" value="Tyr-tRNA-ligase"/>
</dbReference>
<dbReference type="InterPro" id="IPR024088">
    <property type="entry name" value="Tyr-tRNA-ligase_bac-type"/>
</dbReference>
<dbReference type="InterPro" id="IPR024107">
    <property type="entry name" value="Tyr-tRNA-ligase_bac_1"/>
</dbReference>
<dbReference type="NCBIfam" id="TIGR00234">
    <property type="entry name" value="tyrS"/>
    <property type="match status" value="1"/>
</dbReference>
<dbReference type="PANTHER" id="PTHR11766:SF0">
    <property type="entry name" value="TYROSINE--TRNA LIGASE, MITOCHONDRIAL"/>
    <property type="match status" value="1"/>
</dbReference>
<dbReference type="PANTHER" id="PTHR11766">
    <property type="entry name" value="TYROSYL-TRNA SYNTHETASE"/>
    <property type="match status" value="1"/>
</dbReference>
<dbReference type="Pfam" id="PF22421">
    <property type="entry name" value="SYY_C-terminal"/>
    <property type="match status" value="1"/>
</dbReference>
<dbReference type="Pfam" id="PF00579">
    <property type="entry name" value="tRNA-synt_1b"/>
    <property type="match status" value="1"/>
</dbReference>
<dbReference type="PRINTS" id="PR01040">
    <property type="entry name" value="TRNASYNTHTYR"/>
</dbReference>
<dbReference type="SMART" id="SM00363">
    <property type="entry name" value="S4"/>
    <property type="match status" value="1"/>
</dbReference>
<dbReference type="SUPFAM" id="SSF55174">
    <property type="entry name" value="Alpha-L RNA-binding motif"/>
    <property type="match status" value="1"/>
</dbReference>
<dbReference type="SUPFAM" id="SSF52374">
    <property type="entry name" value="Nucleotidylyl transferase"/>
    <property type="match status" value="1"/>
</dbReference>
<dbReference type="PROSITE" id="PS00178">
    <property type="entry name" value="AA_TRNA_LIGASE_I"/>
    <property type="match status" value="1"/>
</dbReference>
<dbReference type="PROSITE" id="PS50889">
    <property type="entry name" value="S4"/>
    <property type="match status" value="1"/>
</dbReference>
<keyword id="KW-0030">Aminoacyl-tRNA synthetase</keyword>
<keyword id="KW-0067">ATP-binding</keyword>
<keyword id="KW-0963">Cytoplasm</keyword>
<keyword id="KW-0436">Ligase</keyword>
<keyword id="KW-0547">Nucleotide-binding</keyword>
<keyword id="KW-0648">Protein biosynthesis</keyword>
<keyword id="KW-1185">Reference proteome</keyword>
<keyword id="KW-0694">RNA-binding</keyword>
<accession>Q5YYA4</accession>